<accession>O57259</accession>
<sequence length="283" mass="33338">MESFKYCFDNDGKKWIIGNTLYSGNSILYKVRKNFTSSFYNYVMKIDHKSHKPLLSEIRFYISVLDPLTIDNWTRERGIKYLAIPDLYGIGETDDYMFFVIKNLGRVFAPKDTESVFEACVTMINTLEFIHSRGFTHGKIEPRNILIRNKRLSLIDYSRTNKLYKSGNSHIDYNEDMITSGNINYMCVDNHLGATVSKRGDLEMLGYCMIEWFGGKLPWKNESSIKVIKQKKEYKKFIATFFEDCFPEGNEPLELVRYIELVYTLDYSQTPNYDRLRRLFIQD</sequence>
<name>KRB2_VACCA</name>
<organism>
    <name type="scientific">Vaccinia virus (strain Ankara)</name>
    <name type="common">VACV</name>
    <dbReference type="NCBI Taxonomy" id="126794"/>
    <lineage>
        <taxon>Viruses</taxon>
        <taxon>Varidnaviria</taxon>
        <taxon>Bamfordvirae</taxon>
        <taxon>Nucleocytoviricota</taxon>
        <taxon>Pokkesviricetes</taxon>
        <taxon>Chitovirales</taxon>
        <taxon>Poxviridae</taxon>
        <taxon>Chordopoxvirinae</taxon>
        <taxon>Orthopoxvirus</taxon>
        <taxon>Vaccinia virus</taxon>
    </lineage>
</organism>
<feature type="chain" id="PRO_0000086195" description="Pseudokinase OPG198">
    <location>
        <begin position="1"/>
        <end position="283"/>
    </location>
</feature>
<feature type="domain" description="Protein kinase" evidence="2">
    <location>
        <begin position="1"/>
        <end position="283"/>
    </location>
</feature>
<feature type="binding site" evidence="2">
    <location>
        <position position="1"/>
    </location>
    <ligand>
        <name>ATP</name>
        <dbReference type="ChEBI" id="CHEBI:30616"/>
    </ligand>
</feature>
<feature type="binding site" evidence="2">
    <location>
        <position position="30"/>
    </location>
    <ligand>
        <name>ATP</name>
        <dbReference type="ChEBI" id="CHEBI:30616"/>
    </ligand>
</feature>
<reference key="1">
    <citation type="journal article" date="1998" name="Virology">
        <title>The complete genomic sequence of the modified vaccinia Ankara strain: comparison with other orthopoxviruses.</title>
        <authorList>
            <person name="Antoine G."/>
            <person name="Scheiflinger F."/>
            <person name="Dorner F."/>
            <person name="Falkner F.G."/>
        </authorList>
    </citation>
    <scope>NUCLEOTIDE SEQUENCE [LARGE SCALE GENOMIC DNA]</scope>
</reference>
<reference key="2">
    <citation type="submission" date="2004-04" db="EMBL/GenBank/DDBJ databases">
        <authorList>
            <person name="Esposito J.J."/>
            <person name="Frace M."/>
            <person name="Sammons S.A."/>
            <person name="Olsen-Rasmussen M.S."/>
            <person name="Osborne J."/>
            <person name="Khristova M."/>
            <person name="Wohlhueter R.M."/>
        </authorList>
    </citation>
    <scope>NUCLEOTIDE SEQUENCE [LARGE SCALE GENOMIC DNA]</scope>
    <source>
        <strain>Isolate Acambis 3000</strain>
    </source>
</reference>
<comment type="function">
    <text evidence="1">Pseudokinase that plays a role in viral DNA replication repression by activating the antiviral protein BANF1 and inhibiting the activity of host VRK1, a cellular modulator of BANF1.</text>
</comment>
<comment type="activity regulation">
    <text evidence="1">Both catalytically active kinases B1/VPK1 and host VRK2 repress B12 inhibitory activity in a B1/VPK1 deletion mutant strain.</text>
</comment>
<comment type="subunit">
    <text evidence="1">Interacts with B1/VPK1. Interacts with host VRK1. Interacts with host VRK2.</text>
</comment>
<comment type="subcellular location">
    <subcellularLocation>
        <location evidence="1">Host nucleus</location>
    </subcellularLocation>
</comment>
<comment type="similarity">
    <text evidence="2">Belongs to the protein kinase superfamily. Ser/Thr protein kinase family. Poxviruses subfamily.</text>
</comment>
<evidence type="ECO:0000250" key="1">
    <source>
        <dbReference type="UniProtKB" id="P24362"/>
    </source>
</evidence>
<evidence type="ECO:0000255" key="2">
    <source>
        <dbReference type="PROSITE-ProRule" id="PRU00159"/>
    </source>
</evidence>
<gene>
    <name type="primary">OPG198</name>
    <name type="ordered locus">MVA180R</name>
    <name type="ordered locus">ACAM3000_MVA_180</name>
</gene>
<organismHost>
    <name type="scientific">Homo sapiens</name>
    <name type="common">Human</name>
    <dbReference type="NCBI Taxonomy" id="9606"/>
</organismHost>
<proteinExistence type="inferred from homology"/>
<dbReference type="EMBL" id="U94848">
    <property type="protein sequence ID" value="AAB96553.1"/>
    <property type="molecule type" value="Genomic_DNA"/>
</dbReference>
<dbReference type="EMBL" id="AY603355">
    <property type="protein sequence ID" value="AAT10576.1"/>
    <property type="molecule type" value="Genomic_DNA"/>
</dbReference>
<dbReference type="PIR" id="T37448">
    <property type="entry name" value="T37448"/>
</dbReference>
<dbReference type="SMR" id="O57259"/>
<dbReference type="Proteomes" id="UP000159908">
    <property type="component" value="Segment"/>
</dbReference>
<dbReference type="Proteomes" id="UP000172909">
    <property type="component" value="Segment"/>
</dbReference>
<dbReference type="GO" id="GO:0042025">
    <property type="term" value="C:host cell nucleus"/>
    <property type="evidence" value="ECO:0007669"/>
    <property type="project" value="UniProtKB-SubCell"/>
</dbReference>
<dbReference type="GO" id="GO:0005524">
    <property type="term" value="F:ATP binding"/>
    <property type="evidence" value="ECO:0007669"/>
    <property type="project" value="UniProtKB-KW"/>
</dbReference>
<dbReference type="GO" id="GO:0004674">
    <property type="term" value="F:protein serine/threonine kinase activity"/>
    <property type="evidence" value="ECO:0007669"/>
    <property type="project" value="UniProtKB-KW"/>
</dbReference>
<dbReference type="Gene3D" id="1.10.510.10">
    <property type="entry name" value="Transferase(Phosphotransferase) domain 1"/>
    <property type="match status" value="1"/>
</dbReference>
<dbReference type="InterPro" id="IPR050235">
    <property type="entry name" value="CK1_Ser-Thr_kinase"/>
</dbReference>
<dbReference type="InterPro" id="IPR011009">
    <property type="entry name" value="Kinase-like_dom_sf"/>
</dbReference>
<dbReference type="InterPro" id="IPR000719">
    <property type="entry name" value="Prot_kinase_dom"/>
</dbReference>
<dbReference type="InterPro" id="IPR001245">
    <property type="entry name" value="Ser-Thr/Tyr_kinase_cat_dom"/>
</dbReference>
<dbReference type="PANTHER" id="PTHR11909">
    <property type="entry name" value="CASEIN KINASE-RELATED"/>
    <property type="match status" value="1"/>
</dbReference>
<dbReference type="Pfam" id="PF07714">
    <property type="entry name" value="PK_Tyr_Ser-Thr"/>
    <property type="match status" value="1"/>
</dbReference>
<dbReference type="SUPFAM" id="SSF56112">
    <property type="entry name" value="Protein kinase-like (PK-like)"/>
    <property type="match status" value="1"/>
</dbReference>
<dbReference type="PROSITE" id="PS50011">
    <property type="entry name" value="PROTEIN_KINASE_DOM"/>
    <property type="match status" value="1"/>
</dbReference>
<protein>
    <recommendedName>
        <fullName>Pseudokinase OPG198</fullName>
    </recommendedName>
</protein>
<keyword id="KW-0067">ATP-binding</keyword>
<keyword id="KW-0244">Early protein</keyword>
<keyword id="KW-1048">Host nucleus</keyword>
<keyword id="KW-0418">Kinase</keyword>
<keyword id="KW-0547">Nucleotide-binding</keyword>
<keyword id="KW-0723">Serine/threonine-protein kinase</keyword>
<keyword id="KW-0808">Transferase</keyword>